<dbReference type="EC" id="6.3.4.21" evidence="1"/>
<dbReference type="EMBL" id="AM260525">
    <property type="protein sequence ID" value="CAK00583.1"/>
    <property type="molecule type" value="Genomic_DNA"/>
</dbReference>
<dbReference type="RefSeq" id="WP_012230407.1">
    <property type="nucleotide sequence ID" value="NC_010161.1"/>
</dbReference>
<dbReference type="SMR" id="A9ILN1"/>
<dbReference type="KEGG" id="btr:BT_0089"/>
<dbReference type="eggNOG" id="COG1488">
    <property type="taxonomic scope" value="Bacteria"/>
</dbReference>
<dbReference type="HOGENOM" id="CLU_030991_1_0_5"/>
<dbReference type="UniPathway" id="UPA00253">
    <property type="reaction ID" value="UER00457"/>
</dbReference>
<dbReference type="Proteomes" id="UP000001592">
    <property type="component" value="Chromosome"/>
</dbReference>
<dbReference type="GO" id="GO:0005829">
    <property type="term" value="C:cytosol"/>
    <property type="evidence" value="ECO:0007669"/>
    <property type="project" value="TreeGrafter"/>
</dbReference>
<dbReference type="GO" id="GO:0004516">
    <property type="term" value="F:nicotinate phosphoribosyltransferase activity"/>
    <property type="evidence" value="ECO:0007669"/>
    <property type="project" value="UniProtKB-UniRule"/>
</dbReference>
<dbReference type="GO" id="GO:0034355">
    <property type="term" value="P:NAD biosynthetic process via the salvage pathway"/>
    <property type="evidence" value="ECO:0007669"/>
    <property type="project" value="TreeGrafter"/>
</dbReference>
<dbReference type="Gene3D" id="3.20.140.10">
    <property type="entry name" value="nicotinate phosphoribosyltransferase"/>
    <property type="match status" value="1"/>
</dbReference>
<dbReference type="HAMAP" id="MF_00570">
    <property type="entry name" value="NAPRTase"/>
    <property type="match status" value="1"/>
</dbReference>
<dbReference type="InterPro" id="IPR041525">
    <property type="entry name" value="N/Namide_PRibTrfase"/>
</dbReference>
<dbReference type="InterPro" id="IPR040727">
    <property type="entry name" value="NAPRTase_N"/>
</dbReference>
<dbReference type="InterPro" id="IPR006406">
    <property type="entry name" value="Nic_PRibTrfase"/>
</dbReference>
<dbReference type="InterPro" id="IPR007229">
    <property type="entry name" value="Nic_PRibTrfase-Fam"/>
</dbReference>
<dbReference type="InterPro" id="IPR036068">
    <property type="entry name" value="Nicotinate_pribotase-like_C"/>
</dbReference>
<dbReference type="NCBIfam" id="TIGR01514">
    <property type="entry name" value="NAPRTase"/>
    <property type="match status" value="1"/>
</dbReference>
<dbReference type="NCBIfam" id="NF003704">
    <property type="entry name" value="PRK05321.1"/>
    <property type="match status" value="1"/>
</dbReference>
<dbReference type="PANTHER" id="PTHR11098">
    <property type="entry name" value="NICOTINATE PHOSPHORIBOSYLTRANSFERASE"/>
    <property type="match status" value="1"/>
</dbReference>
<dbReference type="PANTHER" id="PTHR11098:SF1">
    <property type="entry name" value="NICOTINATE PHOSPHORIBOSYLTRANSFERASE"/>
    <property type="match status" value="1"/>
</dbReference>
<dbReference type="Pfam" id="PF04095">
    <property type="entry name" value="NAPRTase"/>
    <property type="match status" value="1"/>
</dbReference>
<dbReference type="Pfam" id="PF17767">
    <property type="entry name" value="NAPRTase_N"/>
    <property type="match status" value="1"/>
</dbReference>
<dbReference type="PIRSF" id="PIRSF000484">
    <property type="entry name" value="NAPRT"/>
    <property type="match status" value="1"/>
</dbReference>
<dbReference type="SUPFAM" id="SSF51690">
    <property type="entry name" value="Nicotinate/Quinolinate PRTase C-terminal domain-like"/>
    <property type="match status" value="1"/>
</dbReference>
<dbReference type="SUPFAM" id="SSF54675">
    <property type="entry name" value="Nicotinate/Quinolinate PRTase N-terminal domain-like"/>
    <property type="match status" value="1"/>
</dbReference>
<protein>
    <recommendedName>
        <fullName evidence="1">Nicotinate phosphoribosyltransferase</fullName>
        <shortName evidence="1">NAPRTase</shortName>
        <ecNumber evidence="1">6.3.4.21</ecNumber>
    </recommendedName>
</protein>
<reference key="1">
    <citation type="journal article" date="2007" name="Nat. Genet.">
        <title>Genomic analysis of Bartonella identifies type IV secretion systems as host adaptability factors.</title>
        <authorList>
            <person name="Saenz H.L."/>
            <person name="Engel P."/>
            <person name="Stoeckli M.C."/>
            <person name="Lanz C."/>
            <person name="Raddatz G."/>
            <person name="Vayssier-Taussat M."/>
            <person name="Birtles R."/>
            <person name="Schuster S.C."/>
            <person name="Dehio C."/>
        </authorList>
    </citation>
    <scope>NUCLEOTIDE SEQUENCE [LARGE SCALE GENOMIC DNA]</scope>
    <source>
        <strain>CIP 105476 / IBS 506</strain>
    </source>
</reference>
<sequence length="434" mass="50207">MNHPDIARRVYNHTWKLDPIIRSLLDTDFYKLLMVQMIWGLYPTVNVTFSLINRTKTIRLADDIDESELRAQLDHALSLRFTKKEMIWLAGNTFYGRKQIFEPDFLQWLENFQLPEYELARKDGQYILHFHGSWAHSSMWEIPALAIISELRSRAALKKLDRFALDVLYARAKAKMWRKVERLKKLPDIKISDFGTRRRHSFLWQRWCVEALKEGIGDSFTGTSNVLLAMDTDLEALGTNAHELPMVIAALSNNDDELRRAPYQVLQDWNRYYGGNLLIVLPDTFGTEAFLCDAPDWVADWTGFRPDSAPPIEGGERIIQWWKEKGQDPREKLLIFSDALDVDTIEKTYHHFHGKVRMSFGWGTDLTNDFTGCAPQEIATLDALSLVCKVTHANGRPAVKLSDNPEKTIGDSKEVQRYLNFFGNKKRVARPVKM</sequence>
<name>PNCB_BART1</name>
<organism>
    <name type="scientific">Bartonella tribocorum (strain CIP 105476 / IBS 506)</name>
    <dbReference type="NCBI Taxonomy" id="382640"/>
    <lineage>
        <taxon>Bacteria</taxon>
        <taxon>Pseudomonadati</taxon>
        <taxon>Pseudomonadota</taxon>
        <taxon>Alphaproteobacteria</taxon>
        <taxon>Hyphomicrobiales</taxon>
        <taxon>Bartonellaceae</taxon>
        <taxon>Bartonella</taxon>
    </lineage>
</organism>
<evidence type="ECO:0000255" key="1">
    <source>
        <dbReference type="HAMAP-Rule" id="MF_00570"/>
    </source>
</evidence>
<feature type="chain" id="PRO_1000146831" description="Nicotinate phosphoribosyltransferase">
    <location>
        <begin position="1"/>
        <end position="434"/>
    </location>
</feature>
<feature type="modified residue" description="Phosphohistidine; by autocatalysis" evidence="1">
    <location>
        <position position="242"/>
    </location>
</feature>
<proteinExistence type="inferred from homology"/>
<comment type="function">
    <text evidence="1">Catalyzes the synthesis of beta-nicotinate D-ribonucleotide from nicotinate and 5-phospho-D-ribose 1-phosphate at the expense of ATP.</text>
</comment>
<comment type="catalytic activity">
    <reaction evidence="1">
        <text>nicotinate + 5-phospho-alpha-D-ribose 1-diphosphate + ATP + H2O = nicotinate beta-D-ribonucleotide + ADP + phosphate + diphosphate</text>
        <dbReference type="Rhea" id="RHEA:36163"/>
        <dbReference type="ChEBI" id="CHEBI:15377"/>
        <dbReference type="ChEBI" id="CHEBI:30616"/>
        <dbReference type="ChEBI" id="CHEBI:32544"/>
        <dbReference type="ChEBI" id="CHEBI:33019"/>
        <dbReference type="ChEBI" id="CHEBI:43474"/>
        <dbReference type="ChEBI" id="CHEBI:57502"/>
        <dbReference type="ChEBI" id="CHEBI:58017"/>
        <dbReference type="ChEBI" id="CHEBI:456216"/>
        <dbReference type="EC" id="6.3.4.21"/>
    </reaction>
</comment>
<comment type="pathway">
    <text evidence="1">Cofactor biosynthesis; NAD(+) biosynthesis; nicotinate D-ribonucleotide from nicotinate: step 1/1.</text>
</comment>
<comment type="PTM">
    <text evidence="1">Transiently phosphorylated on a His residue during the reaction cycle. Phosphorylation strongly increases the affinity for substrates and increases the rate of nicotinate D-ribonucleotide production. Dephosphorylation regenerates the low-affinity form of the enzyme, leading to product release.</text>
</comment>
<comment type="similarity">
    <text evidence="1">Belongs to the NAPRTase family.</text>
</comment>
<accession>A9ILN1</accession>
<keyword id="KW-0436">Ligase</keyword>
<keyword id="KW-0597">Phosphoprotein</keyword>
<keyword id="KW-0662">Pyridine nucleotide biosynthesis</keyword>
<gene>
    <name evidence="1" type="primary">pncB</name>
    <name type="ordered locus">BT_0089</name>
</gene>